<name>SFSA_PYRNV</name>
<comment type="similarity">
    <text evidence="1">Belongs to the SfsA family.</text>
</comment>
<reference key="1">
    <citation type="submission" date="2008-03" db="EMBL/GenBank/DDBJ databases">
        <title>Complete sequence of Thermoproteus neutrophilus V24Sta.</title>
        <authorList>
            <consortium name="US DOE Joint Genome Institute"/>
            <person name="Copeland A."/>
            <person name="Lucas S."/>
            <person name="Lapidus A."/>
            <person name="Glavina del Rio T."/>
            <person name="Dalin E."/>
            <person name="Tice H."/>
            <person name="Bruce D."/>
            <person name="Goodwin L."/>
            <person name="Pitluck S."/>
            <person name="Sims D."/>
            <person name="Brettin T."/>
            <person name="Detter J.C."/>
            <person name="Han C."/>
            <person name="Kuske C.R."/>
            <person name="Schmutz J."/>
            <person name="Larimer F."/>
            <person name="Land M."/>
            <person name="Hauser L."/>
            <person name="Kyrpides N."/>
            <person name="Mikhailova N."/>
            <person name="Biddle J.F."/>
            <person name="Zhang Z."/>
            <person name="Fitz-Gibbon S.T."/>
            <person name="Lowe T.M."/>
            <person name="Saltikov C."/>
            <person name="House C.H."/>
            <person name="Richardson P."/>
        </authorList>
    </citation>
    <scope>NUCLEOTIDE SEQUENCE [LARGE SCALE GENOMIC DNA]</scope>
    <source>
        <strain>DSM 2338 / JCM 9278 / NBRC 100436 / V24Sta</strain>
    </source>
</reference>
<proteinExistence type="inferred from homology"/>
<sequence length="233" mass="26126">MAHVCLPLDEPDARGVFKRRLNRFVGVAEIGGADELVHIHDPGRLAELLYPGSVIWARRKKTGKTRYYLTAVELADELVFVDSAKHNKIASWLIESGVLLPGYRVERHEPAYGKGRFDLLLRGPKGEKALVEVKGVTLEVGGRALFPDAPTTRGARHMEELARAAADGFEAHVVFLVLRKKAAVFSPNWEMDRRFAEALARAYKSGVYVHAVKLETSRWCLKYVEKLPIDLQL</sequence>
<feature type="chain" id="PRO_1000093595" description="Sugar fermentation stimulation protein homolog">
    <location>
        <begin position="1"/>
        <end position="233"/>
    </location>
</feature>
<gene>
    <name evidence="1" type="primary">sfsA</name>
    <name type="ordered locus">Tneu_1241</name>
</gene>
<accession>B1Y8T9</accession>
<dbReference type="EMBL" id="CP001014">
    <property type="protein sequence ID" value="ACB40168.1"/>
    <property type="molecule type" value="Genomic_DNA"/>
</dbReference>
<dbReference type="RefSeq" id="WP_012350587.1">
    <property type="nucleotide sequence ID" value="NC_010525.1"/>
</dbReference>
<dbReference type="SMR" id="B1Y8T9"/>
<dbReference type="STRING" id="444157.Tneu_1241"/>
<dbReference type="GeneID" id="6166035"/>
<dbReference type="KEGG" id="tne:Tneu_1241"/>
<dbReference type="eggNOG" id="arCOG04115">
    <property type="taxonomic scope" value="Archaea"/>
</dbReference>
<dbReference type="HOGENOM" id="CLU_052299_1_0_2"/>
<dbReference type="OrthoDB" id="34139at2157"/>
<dbReference type="Proteomes" id="UP000001694">
    <property type="component" value="Chromosome"/>
</dbReference>
<dbReference type="GO" id="GO:0003677">
    <property type="term" value="F:DNA binding"/>
    <property type="evidence" value="ECO:0007669"/>
    <property type="project" value="InterPro"/>
</dbReference>
<dbReference type="Gene3D" id="2.40.50.580">
    <property type="match status" value="1"/>
</dbReference>
<dbReference type="Gene3D" id="3.40.1350.60">
    <property type="match status" value="1"/>
</dbReference>
<dbReference type="HAMAP" id="MF_00095">
    <property type="entry name" value="SfsA"/>
    <property type="match status" value="1"/>
</dbReference>
<dbReference type="InterPro" id="IPR005224">
    <property type="entry name" value="SfsA"/>
</dbReference>
<dbReference type="InterPro" id="IPR040452">
    <property type="entry name" value="SfsA_C"/>
</dbReference>
<dbReference type="InterPro" id="IPR041465">
    <property type="entry name" value="SfsA_N"/>
</dbReference>
<dbReference type="NCBIfam" id="TIGR00230">
    <property type="entry name" value="sfsA"/>
    <property type="match status" value="1"/>
</dbReference>
<dbReference type="PANTHER" id="PTHR30545">
    <property type="entry name" value="SUGAR FERMENTATION STIMULATION PROTEIN A"/>
    <property type="match status" value="1"/>
</dbReference>
<dbReference type="PANTHER" id="PTHR30545:SF2">
    <property type="entry name" value="SUGAR FERMENTATION STIMULATION PROTEIN A"/>
    <property type="match status" value="1"/>
</dbReference>
<dbReference type="Pfam" id="PF03749">
    <property type="entry name" value="SfsA"/>
    <property type="match status" value="1"/>
</dbReference>
<dbReference type="Pfam" id="PF17746">
    <property type="entry name" value="SfsA_N"/>
    <property type="match status" value="1"/>
</dbReference>
<protein>
    <recommendedName>
        <fullName evidence="1">Sugar fermentation stimulation protein homolog</fullName>
    </recommendedName>
</protein>
<organism>
    <name type="scientific">Pyrobaculum neutrophilum (strain DSM 2338 / JCM 9278 / NBRC 100436 / V24Sta)</name>
    <name type="common">Thermoproteus neutrophilus</name>
    <dbReference type="NCBI Taxonomy" id="444157"/>
    <lineage>
        <taxon>Archaea</taxon>
        <taxon>Thermoproteota</taxon>
        <taxon>Thermoprotei</taxon>
        <taxon>Thermoproteales</taxon>
        <taxon>Thermoproteaceae</taxon>
        <taxon>Pyrobaculum</taxon>
    </lineage>
</organism>
<evidence type="ECO:0000255" key="1">
    <source>
        <dbReference type="HAMAP-Rule" id="MF_00095"/>
    </source>
</evidence>